<reference key="1">
    <citation type="journal article" date="1994" name="Curr. Genet.">
        <title>Saccharomyces cerevisiae YDR1, which encodes a member of the ATP-binding cassette (ABC) superfamily, is required for multidrug resistance.</title>
        <authorList>
            <person name="Hirata D."/>
            <person name="Yano K."/>
            <person name="Miyahara K."/>
            <person name="Miyakawa T."/>
        </authorList>
    </citation>
    <scope>NUCLEOTIDE SEQUENCE [GENOMIC DNA]</scope>
    <source>
        <strain>ATCC 38626 / AH22 / NRRL Y-12843</strain>
    </source>
</reference>
<reference key="2">
    <citation type="journal article" date="1994" name="J. Biol. Chem.">
        <title>PDR5, a novel yeast multidrug resistance conferring transporter controlled by the transcription regulator PDR1.</title>
        <authorList>
            <person name="Balzi E."/>
            <person name="Wang M."/>
            <person name="Leterme S."/>
            <person name="van Dyck L."/>
            <person name="Goffeau A."/>
        </authorList>
    </citation>
    <scope>NUCLEOTIDE SEQUENCE [GENOMIC DNA]</scope>
    <scope>PARTIAL PROTEIN SEQUENCE</scope>
    <scope>TOPOLOGY</scope>
    <scope>DOMAINS</scope>
    <source>
        <strain>ATCC 204508 / S288c</strain>
    </source>
</reference>
<reference key="3">
    <citation type="journal article" date="1994" name="J. Biol. Chem.">
        <title>Molecular cloning and expression of the Saccharomyces cerevisiae STS1 gene product. A yeast ABC transporter conferring mycotoxin resistance.</title>
        <authorList>
            <person name="Bissinger P.H."/>
            <person name="Kuchler K."/>
        </authorList>
    </citation>
    <scope>NUCLEOTIDE SEQUENCE [GENOMIC DNA]</scope>
    <source>
        <strain>ATCC 204510 / AB320</strain>
    </source>
</reference>
<reference key="4">
    <citation type="journal article" date="1997" name="Yeast">
        <title>Analysis of a 35.6 kb region on the right arm of Saccharomyces cerevisiae chromosome XV.</title>
        <authorList>
            <person name="Bordonne R."/>
            <person name="Camasses A."/>
            <person name="Madania A."/>
            <person name="Poch O."/>
            <person name="Tarassov I.A."/>
            <person name="Winsor B."/>
            <person name="Martin R.P."/>
        </authorList>
    </citation>
    <scope>NUCLEOTIDE SEQUENCE [GENOMIC DNA]</scope>
    <source>
        <strain>S288c / FY1678</strain>
    </source>
</reference>
<reference key="5">
    <citation type="journal article" date="1997" name="Nature">
        <title>The nucleotide sequence of Saccharomyces cerevisiae chromosome XV.</title>
        <authorList>
            <person name="Dujon B."/>
            <person name="Albermann K."/>
            <person name="Aldea M."/>
            <person name="Alexandraki D."/>
            <person name="Ansorge W."/>
            <person name="Arino J."/>
            <person name="Benes V."/>
            <person name="Bohn C."/>
            <person name="Bolotin-Fukuhara M."/>
            <person name="Bordonne R."/>
            <person name="Boyer J."/>
            <person name="Camasses A."/>
            <person name="Casamayor A."/>
            <person name="Casas C."/>
            <person name="Cheret G."/>
            <person name="Cziepluch C."/>
            <person name="Daignan-Fornier B."/>
            <person name="Dang V.-D."/>
            <person name="de Haan M."/>
            <person name="Delius H."/>
            <person name="Durand P."/>
            <person name="Fairhead C."/>
            <person name="Feldmann H."/>
            <person name="Gaillon L."/>
            <person name="Galisson F."/>
            <person name="Gamo F.-J."/>
            <person name="Gancedo C."/>
            <person name="Goffeau A."/>
            <person name="Goulding S.E."/>
            <person name="Grivell L.A."/>
            <person name="Habbig B."/>
            <person name="Hand N.J."/>
            <person name="Hani J."/>
            <person name="Hattenhorst U."/>
            <person name="Hebling U."/>
            <person name="Hernando Y."/>
            <person name="Herrero E."/>
            <person name="Heumann K."/>
            <person name="Hiesel R."/>
            <person name="Hilger F."/>
            <person name="Hofmann B."/>
            <person name="Hollenberg C.P."/>
            <person name="Hughes B."/>
            <person name="Jauniaux J.-C."/>
            <person name="Kalogeropoulos A."/>
            <person name="Katsoulou C."/>
            <person name="Kordes E."/>
            <person name="Lafuente M.J."/>
            <person name="Landt O."/>
            <person name="Louis E.J."/>
            <person name="Maarse A.C."/>
            <person name="Madania A."/>
            <person name="Mannhaupt G."/>
            <person name="Marck C."/>
            <person name="Martin R.P."/>
            <person name="Mewes H.-W."/>
            <person name="Michaux G."/>
            <person name="Paces V."/>
            <person name="Parle-McDermott A.G."/>
            <person name="Pearson B.M."/>
            <person name="Perrin A."/>
            <person name="Pettersson B."/>
            <person name="Poch O."/>
            <person name="Pohl T.M."/>
            <person name="Poirey R."/>
            <person name="Portetelle D."/>
            <person name="Pujol A."/>
            <person name="Purnelle B."/>
            <person name="Ramezani Rad M."/>
            <person name="Rechmann S."/>
            <person name="Schwager C."/>
            <person name="Schweizer M."/>
            <person name="Sor F."/>
            <person name="Sterky F."/>
            <person name="Tarassov I.A."/>
            <person name="Teodoru C."/>
            <person name="Tettelin H."/>
            <person name="Thierry A."/>
            <person name="Tobiasch E."/>
            <person name="Tzermia M."/>
            <person name="Uhlen M."/>
            <person name="Unseld M."/>
            <person name="Valens M."/>
            <person name="Vandenbol M."/>
            <person name="Vetter I."/>
            <person name="Vlcek C."/>
            <person name="Voet M."/>
            <person name="Volckaert G."/>
            <person name="Voss H."/>
            <person name="Wambutt R."/>
            <person name="Wedler H."/>
            <person name="Wiemann S."/>
            <person name="Winsor B."/>
            <person name="Wolfe K.H."/>
            <person name="Zollner A."/>
            <person name="Zumstein E."/>
            <person name="Kleine K."/>
        </authorList>
    </citation>
    <scope>NUCLEOTIDE SEQUENCE [LARGE SCALE GENOMIC DNA]</scope>
    <source>
        <strain>ATCC 204508 / S288c</strain>
    </source>
</reference>
<reference key="6">
    <citation type="journal article" date="2014" name="G3 (Bethesda)">
        <title>The reference genome sequence of Saccharomyces cerevisiae: Then and now.</title>
        <authorList>
            <person name="Engel S.R."/>
            <person name="Dietrich F.S."/>
            <person name="Fisk D.G."/>
            <person name="Binkley G."/>
            <person name="Balakrishnan R."/>
            <person name="Costanzo M.C."/>
            <person name="Dwight S.S."/>
            <person name="Hitz B.C."/>
            <person name="Karra K."/>
            <person name="Nash R.S."/>
            <person name="Weng S."/>
            <person name="Wong E.D."/>
            <person name="Lloyd P."/>
            <person name="Skrzypek M.S."/>
            <person name="Miyasato S.R."/>
            <person name="Simison M."/>
            <person name="Cherry J.M."/>
        </authorList>
    </citation>
    <scope>GENOME REANNOTATION</scope>
    <source>
        <strain>ATCC 204508 / S288c</strain>
    </source>
</reference>
<reference key="7">
    <citation type="journal article" date="1987" name="J. Biol. Chem.">
        <title>The multidrug resistance gene PDR1 from Saccharomyces cerevisiae.</title>
        <authorList>
            <person name="Balzi E."/>
            <person name="Chen W."/>
            <person name="Ulaszewski S."/>
            <person name="Capieaux E."/>
            <person name="Goffeau A."/>
        </authorList>
    </citation>
    <scope>TRANSCRIPTION REGULATION</scope>
</reference>
<reference key="8">
    <citation type="journal article" date="1992" name="Curr. Genet.">
        <title>Interaction of the yeast pleiotropic drug resistance genes PDR1 and PDR5.</title>
        <authorList>
            <person name="Meyers S."/>
            <person name="Schauer W."/>
            <person name="Balzi E."/>
            <person name="Wagner M."/>
            <person name="Goffeau A."/>
            <person name="Golin J."/>
        </authorList>
    </citation>
    <scope>TRANSCRIPTION REGULATION</scope>
</reference>
<reference key="9">
    <citation type="journal article" date="1994" name="Antimicrob. Agents Chemother.">
        <title>Loss of function mutation in the yeast multiple drug resistance gene PDR5 causes a reduction in chloramphenicol efflux.</title>
        <authorList>
            <person name="Leonard P.J."/>
            <person name="Rathod P.K."/>
            <person name="Golin J."/>
        </authorList>
    </citation>
    <scope>SUBSTRATES</scope>
</reference>
<reference key="10">
    <citation type="journal article" date="1994" name="J. Biol. Chem.">
        <title>Solubilization and characterization of the overexpressed PDR5 multidrug resistance nucleotide triphosphatase of yeast.</title>
        <authorList>
            <person name="Decottignies A."/>
            <person name="Kolaczkowski M."/>
            <person name="Balzi E."/>
            <person name="Goffeau A."/>
        </authorList>
    </citation>
    <scope>PURIFICATION</scope>
    <scope>BIOPHYSICOCHEMICAL PROPERTIES</scope>
</reference>
<reference key="11">
    <citation type="journal article" date="1994" name="Mol. Cell. Biol.">
        <title>Transcriptional control of the yeast PDR5 gene by the PDR3 gene product.</title>
        <authorList>
            <person name="Katzmann D.J."/>
            <person name="Burnett P.E."/>
            <person name="Golin J."/>
            <person name="Mahe Y."/>
            <person name="Moye-Rowley W.S."/>
        </authorList>
    </citation>
    <scope>TRANSCRIPTION REGULATION</scope>
</reference>
<reference key="12">
    <citation type="journal article" date="1995" name="Mol. Cell. Biol.">
        <title>Positive autoregulation of the yeast transcription factor Pdr3p, which is involved in control of drug resistance.</title>
        <authorList>
            <person name="Delahodde A."/>
            <person name="Delaveau T."/>
            <person name="Jacq C."/>
        </authorList>
    </citation>
    <scope>TRANSCRIPTION REGULATION</scope>
</reference>
<reference key="13">
    <citation type="journal article" date="1995" name="Mol. Cell. Biol.">
        <title>Endocytosis and vacuolar degradation of the plasma membrane-localized Pdr5 ATP-binding cassette multidrug transporter in Saccharomyces cerevisiae.</title>
        <authorList>
            <person name="Egner R."/>
            <person name="Mahe Y."/>
            <person name="Pandjaitan R."/>
            <person name="Kuchler K."/>
        </authorList>
    </citation>
    <scope>DEGRADATION</scope>
</reference>
<reference key="14">
    <citation type="journal article" date="1995" name="Proc. Natl. Acad. Sci. U.S.A.">
        <title>LEM1, an ATP-binding-cassette transporter, selectively modulates the biological potency of steroid hormones.</title>
        <authorList>
            <person name="Kralli A."/>
            <person name="Bohen S.P."/>
            <person name="Yamamoto K.R."/>
        </authorList>
    </citation>
    <scope>FUNCTION</scope>
</reference>
<reference key="15">
    <citation type="journal article" date="1996" name="Curr. Genet.">
        <title>yAP-1- and yAP-2-mediated, heat shock-induced transcriptional activation of the multidrug resistance ABC transporter genes in Saccharomyces cerevisiae.</title>
        <authorList>
            <person name="Miyahara K."/>
            <person name="Hirata D."/>
            <person name="Miyakawa T."/>
        </authorList>
    </citation>
    <scope>TRANSCRIPTION REGULATION</scope>
</reference>
<reference key="16">
    <citation type="journal article" date="1996" name="FEBS Lett.">
        <title>The yeast multidrug transporter Pdr5 of the plasma membrane is ubiquitinated prior to endocytosis and degradation in the vacuole.</title>
        <authorList>
            <person name="Egner R."/>
            <person name="Kuchler K."/>
        </authorList>
    </citation>
    <scope>DEGRADATION</scope>
</reference>
<reference key="17">
    <citation type="journal article" date="1996" name="FEBS Lett.">
        <title>The involvement of the Saccharomyces cerevisiae multidrug resistance transporters Pdr5p and Snq2p in cation resistance.</title>
        <authorList>
            <person name="Miyahara K."/>
            <person name="Mizunuma M."/>
            <person name="Hirata D."/>
            <person name="Tsuchiya E."/>
            <person name="Miyakawa T."/>
        </authorList>
    </citation>
    <scope>FUNCTION</scope>
</reference>
<reference key="18">
    <citation type="journal article" date="1996" name="J. Biol. Chem.">
        <title>An FK506-sensitive transporter selectively decreases intracellular levels and potency of steroid hormones.</title>
        <authorList>
            <person name="Kralli A."/>
            <person name="Yamamoto K.R."/>
        </authorList>
    </citation>
    <scope>INHIBITORS</scope>
</reference>
<reference key="19">
    <citation type="journal article" date="1996" name="J. Biol. Chem.">
        <title>The ATP binding cassette transporters Pdr5 and Snq2 of Saccharomyces cerevisiae can mediate transport of steroids in vivo.</title>
        <authorList>
            <person name="Mahe Y."/>
            <person name="Lemoine Y."/>
            <person name="Kuchler K."/>
        </authorList>
    </citation>
    <scope>FUNCTION</scope>
</reference>
<reference key="20">
    <citation type="journal article" date="1996" name="J. Biol. Chem.">
        <title>Anticancer drugs, ionophoric peptides, and steroids as substrates of the yeast multidrug transporter Pdr5p.</title>
        <authorList>
            <person name="Kolaczkowski M."/>
            <person name="van der Rest M."/>
            <person name="Cybularz-Kolaczkowska A."/>
            <person name="Soumillion J.P."/>
            <person name="Konings W.N."/>
            <person name="Goffeau A."/>
        </authorList>
    </citation>
    <scope>FUNCTION</scope>
</reference>
<reference key="21">
    <citation type="journal article" date="1997" name="J. Biol. Chem.">
        <title>Camptothecin sensitivity is mediated by the pleiotropic drug resistance network in yeast.</title>
        <authorList>
            <person name="Reid R.J.D."/>
            <person name="Kauh E.A."/>
            <person name="Bjornsti M.-A."/>
        </authorList>
    </citation>
    <scope>SUBSTRATES</scope>
</reference>
<reference key="22">
    <citation type="journal article" date="1997" name="Mol. Gen. Genet.">
        <title>Clustered amino acid substitutions in the yeast transcription regulator Pdr3p increase pleiotropic drug resistance and identify a new central regulatory domain.</title>
        <authorList>
            <person name="Nourani A."/>
            <person name="Papajova D."/>
            <person name="Delahodde A."/>
            <person name="Jacq C."/>
            <person name="Subik J."/>
        </authorList>
    </citation>
    <scope>TRANSCRIPTION REGULATION</scope>
</reference>
<reference key="23">
    <citation type="journal article" date="1997" name="Mol. Gen. Genet.">
        <title>Molecular and phenotypic characterization of yeast PDR1 mutants that show hyperactive transcription of various ABC multidrug transporter genes.</title>
        <authorList>
            <person name="Carvajal E."/>
            <person name="van den Hazel H.B."/>
            <person name="Cybularz-Kolaczkowska A."/>
            <person name="Balzi E."/>
            <person name="Goffeau A."/>
        </authorList>
    </citation>
    <scope>INDUCTION</scope>
</reference>
<reference key="24">
    <citation type="journal article" date="1997" name="Nat. Genet.">
        <title>Complete inventory of the yeast ABC proteins.</title>
        <authorList>
            <person name="Decottignies A."/>
            <person name="Goffeau A."/>
        </authorList>
    </citation>
    <scope>PROTEIN FAMILY</scope>
</reference>
<reference key="25">
    <citation type="journal article" date="1998" name="Antimicrob. Agents Chemother.">
        <title>Role of ABC transporters in aureobasidin A resistance.</title>
        <authorList>
            <person name="Ogawa A."/>
            <person name="Hashida-Okado T."/>
            <person name="Endo M."/>
            <person name="Yoshioka H."/>
            <person name="Tsuruo T."/>
            <person name="Takesako K."/>
            <person name="Kato I."/>
        </authorList>
    </citation>
    <scope>SUBSTRATES</scope>
</reference>
<reference key="26">
    <citation type="journal article" date="1998" name="J. Biol. Chem.">
        <title>Endoplasmic reticulum degradation of a mutated ATP-binding cassette transporter Pdr5 proceeds in a concerted action of Sec61 and the proteasome.</title>
        <authorList>
            <person name="Plemper R.K."/>
            <person name="Egner R."/>
            <person name="Kuchler K."/>
            <person name="Wolf D.H."/>
        </authorList>
    </citation>
    <scope>TRAFFICKING</scope>
</reference>
<reference key="27">
    <citation type="journal article" date="1998" name="Mol. Biol. Cell">
        <title>Genetic separation of FK506 susceptibility and drug transport in the yeast Pdr5 ATP-binding cassette multidrug resistance transporter.</title>
        <authorList>
            <person name="Egner R."/>
            <person name="Rosenthal F.E."/>
            <person name="Kralli A."/>
            <person name="Sanglard D."/>
            <person name="Kuchler K."/>
        </authorList>
    </citation>
    <scope>FUNCTION</scope>
    <scope>MUTAGENESIS</scope>
</reference>
<reference key="28">
    <citation type="journal article" date="1998" name="Microb. Drug Resist.">
        <title>In vivo characterization of the drug resistance profile of the major ABC transporters and other components of the yeast pleiotropic drug resistance network.</title>
        <authorList>
            <person name="Kolaczkowski M."/>
            <person name="Kolaczowska A."/>
            <person name="Luczynski J."/>
            <person name="Witek S."/>
            <person name="Goffeau A."/>
        </authorList>
    </citation>
    <scope>FUNCTION</scope>
</reference>
<reference key="29">
    <citation type="journal article" date="1999" name="J. Biol. Chem.">
        <title>Casein kinase I-dependent phosphorylation and stability of the yeast multidrug transporter Pdr5p.</title>
        <authorList>
            <person name="Decottignies A."/>
            <person name="Owsianik G."/>
            <person name="Ghislain M."/>
        </authorList>
    </citation>
    <scope>PHOSPHORYLATION BY CK1</scope>
</reference>
<reference key="30">
    <citation type="journal article" date="2000" name="Antimicrob. Agents Chemother.">
        <title>Chemical specificity of the PDR5 multidrug resistance gene product of Saccharomyces cerevisiae based on studies with tri-n-alkyltin chlorides.</title>
        <authorList>
            <person name="Golin J."/>
            <person name="Barkatt A."/>
            <person name="Cronin S."/>
            <person name="Eng G."/>
            <person name="May L."/>
        </authorList>
    </citation>
    <scope>SUBSTRATES</scope>
</reference>
<reference key="31">
    <citation type="journal article" date="2000" name="Antimicrob. Agents Chemother.">
        <title>Role of the PDR gene network in yeast susceptibility to the antifungal antibiotic mucidin.</title>
        <authorList>
            <person name="Michalkova-Papajova D."/>
            <person name="Obernauerova M."/>
            <person name="Subik J."/>
        </authorList>
    </citation>
    <scope>SUBSTRATES</scope>
</reference>
<reference key="32">
    <citation type="journal article" date="2000" name="Mol. Microbiol.">
        <title>The transmembrane domain 10 of the yeast Pdr5p ABC antifungal efflux pump determines both substrate specificity and inhibitor susceptibility.</title>
        <authorList>
            <person name="Egner R."/>
            <person name="Bauer B.E."/>
            <person name="Kuchler K."/>
        </authorList>
    </citation>
    <scope>TOPOLOGY</scope>
    <scope>MUTAGENESIS</scope>
</reference>
<reference key="33">
    <citation type="journal article" date="2000" name="FEBS Lett.">
        <title>Genome microarray analysis of transcriptional activation in multidrug resistance yeast mutants.</title>
        <authorList>
            <person name="DeRisi J."/>
            <person name="van den Hazel B."/>
            <person name="Marc P."/>
            <person name="Balzi E."/>
            <person name="Brown P."/>
            <person name="Jacq C."/>
            <person name="Goffeau A."/>
        </authorList>
    </citation>
    <scope>TRANSCRIPTION REGULATION</scope>
</reference>
<reference key="34">
    <citation type="journal article" date="2000" name="Biochemistry">
        <title>Prenyl-flavonoids as potent inhibitors of the Pdr5p multidrug ABC transporter from Saccharomyces cerevisiae.</title>
        <authorList>
            <person name="Conseil G."/>
            <person name="Decottignies A."/>
            <person name="Jault J.-M."/>
            <person name="Comte G."/>
            <person name="Barron D."/>
            <person name="Goffeau A."/>
            <person name="Di Pietro A."/>
        </authorList>
    </citation>
    <scope>FUNCTION</scope>
    <scope>INHIBITORS</scope>
</reference>
<reference key="35">
    <citation type="journal article" date="2001" name="Biochemistry">
        <title>Protein kinase C effectors bind to multidrug ABC transporters and inhibit their activity.</title>
        <authorList>
            <person name="Conseil G."/>
            <person name="Perez-Victoria J.M."/>
            <person name="Jault J.-M."/>
            <person name="Gamarro F."/>
            <person name="Goffeau A."/>
            <person name="Hofmann J."/>
            <person name="Di Pietro A."/>
        </authorList>
    </citation>
    <scope>INHIBITORS</scope>
</reference>
<reference key="36">
    <citation type="journal article" date="2001" name="Biosci. Biotechnol. Biochem.">
        <title>A novel screening for inhibitors of a pleiotropic drug resistant pump, Pdr5, in Saccharomyces cerevisiae.</title>
        <authorList>
            <person name="Hiraga K."/>
            <person name="Wanigasekera A."/>
            <person name="Sugi H."/>
            <person name="Hamanaka N."/>
            <person name="Oda K."/>
        </authorList>
    </citation>
    <scope>BIOTECHNOLOGY</scope>
</reference>
<reference key="37">
    <citation type="journal article" date="2001" name="Biosci. Biotechnol. Biochem.">
        <title>Purification and some properties of an inhibitor for a yeast pleiotropic drug resistant pump from Kitasatospora sp. E-420.</title>
        <authorList>
            <person name="Wanigasekera A."/>
            <person name="Hiraga K."/>
            <person name="Hamanaka N."/>
            <person name="Oda K."/>
        </authorList>
    </citation>
    <scope>INHIBITORS</scope>
</reference>
<reference key="38">
    <citation type="journal article" date="2001" name="Eur. J. Biochem.">
        <title>The ABC transporter Pdr5p mediates the efflux of nonsteroidal ecdysone agonists in Saccharomyces cerevisiae.</title>
        <authorList>
            <person name="Hu W."/>
            <person name="Feng Q."/>
            <person name="Palli S.R."/>
            <person name="Krell P.J."/>
            <person name="Arif B.M."/>
            <person name="Retnakaran A."/>
        </authorList>
    </citation>
    <scope>SUBSTRATES</scope>
</reference>
<reference key="39">
    <citation type="journal article" date="2001" name="J. Biol. Chem.">
        <title>Saccharomyces cerevisiae multidrug resistance gene expression inversely correlates with the status of the F(0) component of the mitochondrial ATPase.</title>
        <authorList>
            <person name="Zhang X."/>
            <person name="Moye-Rowley W.S."/>
        </authorList>
    </citation>
    <scope>METABOLIC REGULATION</scope>
</reference>
<reference key="40">
    <citation type="journal article" date="2001" name="J. Mol. Microbiol. Biotechnol.">
        <title>The pleitropic drug ABC transporters from Saccharomyces cerevisiae.</title>
        <authorList>
            <person name="Rogers B."/>
            <person name="Decottignies A."/>
            <person name="Kolaczkowski M."/>
            <person name="Carvajal E."/>
            <person name="Balzi E."/>
            <person name="Goffeau A."/>
        </authorList>
    </citation>
    <scope>FUNCTION</scope>
</reference>
<reference key="41">
    <citation type="journal article" date="2002" name="J. Biol. Chem.">
        <title>Zinc cluster protein Rdr1p is a transcriptional repressor of the PDR5 gene encoding a multidrug transporter.</title>
        <authorList>
            <person name="Hellauer K."/>
            <person name="Akache B."/>
            <person name="MacPherson S."/>
            <person name="Sirard E."/>
            <person name="Turcotte B."/>
        </authorList>
    </citation>
    <scope>TRANSCRIPTION REGULATION</scope>
</reference>
<reference key="42">
    <citation type="journal article" date="2002" name="J. Biol. Chem.">
        <title>New regulators of drug sensitivity in the family of yeast zinc cluster proteins.</title>
        <authorList>
            <person name="Akache B."/>
            <person name="Turcotte B."/>
        </authorList>
    </citation>
    <scope>TRANSCRIPTION REGULATION</scope>
</reference>
<reference key="43">
    <citation type="journal article" date="2002" name="Proteomics">
        <title>Subproteomics: identification of plasma membrane proteins from the yeast Saccharomyces cerevisiae.</title>
        <authorList>
            <person name="Navarre C."/>
            <person name="Degand H."/>
            <person name="Bennett K.L."/>
            <person name="Crawford J.S."/>
            <person name="Moertz E."/>
            <person name="Boutry M."/>
        </authorList>
    </citation>
    <scope>SUBCELLULAR LOCATION</scope>
</reference>
<reference key="44">
    <citation type="journal article" date="2003" name="Biochim. Biophys. Acta">
        <title>Potent competitive inhibition of drug binding to the Saccharomyces cerevisiae ABC exporter Pdr5p by the hydrophobic estradiol-derivative RU49953.</title>
        <authorList>
            <person name="Conseil G."/>
            <person name="Perez-Victoria J.M."/>
            <person name="Renoir J.M."/>
            <person name="Goffeau A."/>
            <person name="Di Pietro A."/>
        </authorList>
    </citation>
    <scope>FUNCTION</scope>
    <scope>INHIBITORS</scope>
</reference>
<reference key="45">
    <citation type="journal article" date="2003" name="Int. J. Antimicrob. Agents">
        <title>Phenothiazines as potent modulators of yeast multidrug resistance.</title>
        <authorList>
            <person name="Kolaczkowski M."/>
            <person name="Michalak K."/>
            <person name="Motohashi N."/>
        </authorList>
    </citation>
    <scope>FUNCTION</scope>
    <scope>INHIBITORS</scope>
</reference>
<reference key="46">
    <citation type="journal article" date="2003" name="J. Biol. Chem.">
        <title>Studies with novel Pdr5p substrates demonstrate a strong size dependence for xenobiotic efflux.</title>
        <authorList>
            <person name="Golin J."/>
            <person name="Ambudkar S.V."/>
            <person name="Gottesman M.M."/>
            <person name="Habib A.D."/>
            <person name="Sczepanski J."/>
            <person name="Ziccardi W."/>
            <person name="May L."/>
        </authorList>
    </citation>
    <scope>SUBSTRATES</scope>
</reference>
<reference key="47">
    <citation type="journal article" date="2003" name="J. Biol. Chem.">
        <title>A general strategy to uncover transcription factor properties identifies a new regulator of drug resistance in yeast.</title>
        <authorList>
            <person name="Hikkel I."/>
            <person name="Lucau-Danila A."/>
            <person name="Delaveau T."/>
            <person name="Marc P."/>
            <person name="Devaux F."/>
            <person name="Jacq C."/>
        </authorList>
    </citation>
    <scope>TRANSCRIPTION REGULATION</scope>
</reference>
<reference key="48">
    <citation type="journal article" date="2003" name="J. Biol. Chem.">
        <title>Three-dimensional reconstruction of the Saccharomyces cerevisiae multidrug resistance protein Pdr5p.</title>
        <authorList>
            <person name="Ferreira-Pereira A."/>
            <person name="Marco S."/>
            <person name="Decottignies A."/>
            <person name="Nader J."/>
            <person name="Goffeau A."/>
            <person name="Rigaud J.L."/>
        </authorList>
    </citation>
    <scope>PURIFICATION</scope>
    <scope>ELECTRON MICROSCOPY</scope>
</reference>
<reference key="49">
    <citation type="journal article" date="2003" name="J. Biol. Chem.">
        <title>Antifungal activity of amiodarone is mediated by disruption of calcium homeostasis.</title>
        <authorList>
            <person name="Gupta S.S."/>
            <person name="Ton V.-K."/>
            <person name="Beaudry V."/>
            <person name="Rulli S."/>
            <person name="Cunningham K."/>
            <person name="Rao R."/>
        </authorList>
    </citation>
    <scope>SUBSTRATES</scope>
</reference>
<reference key="50">
    <citation type="journal article" date="2003" name="Nature">
        <title>Global analysis of protein expression in yeast.</title>
        <authorList>
            <person name="Ghaemmaghami S."/>
            <person name="Huh W.-K."/>
            <person name="Bower K."/>
            <person name="Howson R.W."/>
            <person name="Belle A."/>
            <person name="Dephoure N."/>
            <person name="O'Shea E.K."/>
            <person name="Weissman J.S."/>
        </authorList>
    </citation>
    <scope>LEVEL OF PROTEIN EXPRESSION [LARGE SCALE ANALYSIS]</scope>
</reference>
<reference key="51">
    <citation type="journal article" date="2003" name="Nat. Biotechnol.">
        <title>A proteomics approach to understanding protein ubiquitination.</title>
        <authorList>
            <person name="Peng J."/>
            <person name="Schwartz D."/>
            <person name="Elias J.E."/>
            <person name="Thoreen C.C."/>
            <person name="Cheng D."/>
            <person name="Marsischky G."/>
            <person name="Roelofs J."/>
            <person name="Finley D."/>
            <person name="Gygi S.P."/>
        </authorList>
    </citation>
    <scope>UBIQUITINATION [LARGE SCALE ANALYSIS] AT LYS-825</scope>
    <scope>IDENTIFICATION BY MASS SPECTROMETRY</scope>
    <source>
        <strain>SUB592</strain>
    </source>
</reference>
<reference key="52">
    <citation type="journal article" date="2003" name="Proc. Natl. Acad. Sci. U.S.A.">
        <title>A subset of membrane-associated proteins is ubiquitinated in response to mutations in the endoplasmic reticulum degradation machinery.</title>
        <authorList>
            <person name="Hitchcock A.L."/>
            <person name="Auld K."/>
            <person name="Gygi S.P."/>
            <person name="Silver P.A."/>
        </authorList>
    </citation>
    <scope>UBIQUITINATION [LARGE SCALE ANALYSIS] AT LYS-825</scope>
    <scope>IDENTIFICATION BY MASS SPECTROMETRY</scope>
</reference>
<reference key="53">
    <citation type="journal article" date="2003" name="Toxicol. in Vitro">
        <title>A yeast-based method for the detection of cyto and genotoxicity.</title>
        <authorList>
            <person name="Lichtenberg-Frate H."/>
            <person name="Schmitt M."/>
            <person name="Gellert G."/>
            <person name="Ludwig J."/>
        </authorList>
    </citation>
    <scope>BIOTECHNOLOGY</scope>
</reference>
<reference key="54">
    <citation type="journal article" date="2004" name="Antimicrob. Agents Chemother.">
        <title>Chemosensitization of fluconazole resistance in Saccharomyces cerevisiae and pathogenic fungi by a D-octapeptide derivative.</title>
        <authorList>
            <person name="Niimi K."/>
            <person name="Harding D.R."/>
            <person name="Parshot R."/>
            <person name="King A."/>
            <person name="Lun D.J."/>
            <person name="Decottignies A."/>
            <person name="Niimi M."/>
            <person name="Lin S."/>
            <person name="Cannon R.D."/>
            <person name="Goffeau A."/>
            <person name="Monk B.C."/>
        </authorList>
    </citation>
    <scope>BIOTECHNOLOGY</scope>
</reference>
<reference key="55">
    <citation type="journal article" date="2004" name="Eur. J. Biochem.">
        <title>The transporters Pdr5p and Snq2p mediate diazaborine resistance and are under the control of the gain-of-function allele PDR1-12.</title>
        <authorList>
            <person name="Wehrschutz-Sigl E."/>
            <person name="Jungwirth H."/>
            <person name="Bergler H."/>
            <person name="Hogenauer G."/>
        </authorList>
    </citation>
    <scope>SUBSTRATES</scope>
</reference>
<reference key="56">
    <citation type="journal article" date="2004" name="FEBS Lett.">
        <title>Expression regulation of the yeast PDR5 ATP-binding cassette (ABC) transporter suggests a role in cellular detoxification during the exponential growth phase.</title>
        <authorList>
            <person name="Mamnun Y.M."/>
            <person name="Schuller C."/>
            <person name="Kuchler K."/>
        </authorList>
    </citation>
    <scope>FUNCTION</scope>
</reference>
<reference key="57">
    <citation type="journal article" date="2004" name="J. Biol. Chem.">
        <title>On the mechanism of constitutive Pdr1 activator-mediated PDR5 transcription in Saccharomyces cerevisiae: evidence for enhanced recruitment of coactivators and altered nucleosome structures.</title>
        <authorList>
            <person name="Gao C."/>
            <person name="Wang L."/>
            <person name="Milgrom E."/>
            <person name="Shen W.C."/>
        </authorList>
    </citation>
    <scope>INDUCTION</scope>
</reference>
<reference key="58">
    <citation type="journal article" date="2005" name="Biochem. Biophys. Res. Commun.">
        <title>Enniatin has a new function as an inhibitor of Pdr5p, one of the ABC transporters in Saccharomyces cerevisiae.</title>
        <authorList>
            <person name="Hiraga K."/>
            <person name="Yamamoto S."/>
            <person name="Fukuda H."/>
            <person name="Hamanaka N."/>
            <person name="Oda K."/>
        </authorList>
    </citation>
    <scope>INHIBITORS</scope>
</reference>
<reference key="59">
    <citation type="journal article" date="2005" name="Biochem. Biophys. Res. Commun.">
        <title>A new function of isonitrile as an inhibitor of the Pdr5p multidrug ABC transporter in Saccharomyces cerevisiae.</title>
        <authorList>
            <person name="Yamamoto S."/>
            <person name="Hiraga K."/>
            <person name="Abiko A."/>
            <person name="Hamanaka N."/>
            <person name="Oda K."/>
        </authorList>
    </citation>
    <scope>INHIBITORS</scope>
</reference>
<reference key="60">
    <citation type="journal article" date="2005" name="Biochemistry">
        <title>The role of hydrogen bond acceptor groups in the interaction of substrates with Pdr5p, a major yeast drug transporter.</title>
        <authorList>
            <person name="Hanson L."/>
            <person name="May L."/>
            <person name="Tuma P."/>
            <person name="Keeven J."/>
            <person name="Mehl P."/>
            <person name="Ferenz M."/>
            <person name="Ambudkar S.V."/>
            <person name="Golin J."/>
        </authorList>
    </citation>
    <scope>SUBSTRATES</scope>
</reference>
<reference key="61">
    <citation type="journal article" date="2005" name="Gene">
        <title>Retrograde regulation of multidrug resistance in Saccharomyces cerevisiae.</title>
        <authorList>
            <person name="Moye-Rowley W.S."/>
        </authorList>
    </citation>
    <scope>METABOLIC REGULATION</scope>
</reference>
<reference key="62">
    <citation type="journal article" date="2005" name="Genes Cells">
        <title>Mutational analysis of the yeast multidrug resistance ABC transporter Pdr5p with altered drug specificity.</title>
        <authorList>
            <person name="Tutulan-Cunita A.C."/>
            <person name="Mikoshi M."/>
            <person name="Mizunuma M."/>
            <person name="Hirata D."/>
            <person name="Miyakawa T."/>
        </authorList>
    </citation>
    <scope>FUNCTION</scope>
    <scope>MUTAGENESIS</scope>
</reference>
<reference key="63">
    <citation type="journal article" date="2005" name="Int. J. Biochem. Cell Biol.">
        <title>Activity of yeast multidrug resistance pumps during growth is controlled by carbon source and the composition of growth-depleted medium: DiS-C3(3) fluorescence assay.</title>
        <authorList>
            <person name="Malac J."/>
            <person name="Urbankova E."/>
            <person name="Sigler K."/>
            <person name="Gaskova D."/>
        </authorList>
    </citation>
    <scope>INDUCTION</scope>
</reference>
<reference key="64">
    <citation type="journal article" date="2005" name="J. Biol. Chem.">
        <title>Regulation of the sphingoid long-chain base kinase Lcb4p by ergosterol and heme: studies in phytosphingosine-resistant mutants.</title>
        <authorList>
            <person name="Sano T."/>
            <person name="Kihara A."/>
            <person name="Kurotsu F."/>
            <person name="Iwaki S."/>
            <person name="Igarashi Y."/>
        </authorList>
    </citation>
    <scope>SUBSTRATES</scope>
</reference>
<reference key="65">
    <citation type="journal article" date="2005" name="Mol. Cell. Biol.">
        <title>Early expression of yeast genes affected by chemical stress.</title>
        <authorList>
            <person name="Lucau-Danila A."/>
            <person name="Lelandais G."/>
            <person name="Kozovska Z."/>
            <person name="Tanty V."/>
            <person name="Delaveau T."/>
            <person name="Devaux F."/>
            <person name="Jacq C."/>
        </authorList>
    </citation>
    <scope>INDUCTION</scope>
</reference>
<reference key="66">
    <citation type="journal article" date="2006" name="FEMS Yeast Res.">
        <title>Early transcriptional response of Saccharomyces cerevisiae to stress imposed by the herbicide 2,4-dichlorophenoxyacetic acid.</title>
        <authorList>
            <person name="Teixeira M.C."/>
            <person name="Fernandes A.R."/>
            <person name="Mira N.P."/>
            <person name="Becker J.D."/>
            <person name="Sa-Correia I."/>
        </authorList>
    </citation>
    <scope>INDUCTION</scope>
</reference>
<reference key="67">
    <citation type="journal article" date="2006" name="FEMS Yeast Res.">
        <title>Adaptive response to the antimalarial drug artesunate in yeast involves Pdr1p/Pdr3p-mediated transcriptional activation of the resistance determinants TPO1 and PDR5.</title>
        <authorList>
            <person name="Alenquer M."/>
            <person name="Tenreiro S."/>
            <person name="Sa-Correia I."/>
        </authorList>
    </citation>
    <scope>INDUCTION</scope>
</reference>
<reference key="68">
    <citation type="journal article" date="2006" name="Genetics">
        <title>ELM1 is required for multidrug resistance in Saccharomyces cerevisiae.</title>
        <authorList>
            <person name="Souid A.K."/>
            <person name="Gao C."/>
            <person name="Wang L."/>
            <person name="Milgrom E."/>
            <person name="Shen W.C."/>
        </authorList>
    </citation>
    <scope>METABOLIC REGULATION</scope>
    <scope>FUNCTION</scope>
</reference>
<reference key="69">
    <citation type="journal article" date="2006" name="Proc. Natl. Acad. Sci. U.S.A.">
        <title>A global topology map of the Saccharomyces cerevisiae membrane proteome.</title>
        <authorList>
            <person name="Kim H."/>
            <person name="Melen K."/>
            <person name="Oesterberg M."/>
            <person name="von Heijne G."/>
        </authorList>
    </citation>
    <scope>TOPOLOGY [LARGE SCALE ANALYSIS]</scope>
    <source>
        <strain>ATCC 208353 / W303-1A</strain>
    </source>
</reference>
<reference key="70">
    <citation type="journal article" date="2007" name="Biochem. Biophys. Res. Commun.">
        <title>The yeast Pdr5p multidrug transporter: how does it recognize so many substrates?</title>
        <authorList>
            <person name="Golin J."/>
            <person name="Ambudkar S.V."/>
            <person name="May L."/>
        </authorList>
    </citation>
    <scope>FUNCTION</scope>
</reference>
<reference key="71">
    <citation type="journal article" date="2007" name="J. Biol. Chem.">
        <title>The central role of PDR1 in the foundation of yeast drug resistance.</title>
        <authorList>
            <person name="Fardeau V."/>
            <person name="Lelandais G."/>
            <person name="Oldfield A."/>
            <person name="Salin H."/>
            <person name="Lemoine S."/>
            <person name="Garcia M."/>
            <person name="Tanty V."/>
            <person name="Le Crom S."/>
            <person name="Jacq C."/>
            <person name="Devaux F."/>
        </authorList>
    </citation>
    <scope>TRANSCRIPTION REGULATION</scope>
</reference>
<reference key="72">
    <citation type="journal article" date="2007" name="J. Proteome Res.">
        <title>Large-scale phosphorylation analysis of alpha-factor-arrested Saccharomyces cerevisiae.</title>
        <authorList>
            <person name="Li X."/>
            <person name="Gerber S.A."/>
            <person name="Rudner A.D."/>
            <person name="Beausoleil S.A."/>
            <person name="Haas W."/>
            <person name="Villen J."/>
            <person name="Elias J.E."/>
            <person name="Gygi S.P."/>
        </authorList>
    </citation>
    <scope>PHOSPHORYLATION [LARGE SCALE ANALYSIS] AT THR-49; SER-54; SER-61; SER-837; SER-849; SER-850 AND SER-854</scope>
    <scope>IDENTIFICATION BY MASS SPECTROMETRY [LARGE SCALE ANALYSIS]</scope>
    <source>
        <strain>ADR376</strain>
    </source>
</reference>
<reference key="73">
    <citation type="journal article" date="2007" name="Mol. Microbiol.">
        <title>Subcellular trafficking of the yeast plasma membrane ABC transporter, Pdr5, is impaired by a mutation in the N-terminal nucleotide-binding fold.</title>
        <authorList>
            <person name="de Thozee C.P."/>
            <person name="Cronin S."/>
            <person name="Goj A."/>
            <person name="Golin J."/>
            <person name="Ghislain M."/>
        </authorList>
    </citation>
    <scope>TRAFFICKING</scope>
</reference>
<reference key="74">
    <citation type="journal article" date="2007" name="Proc. Natl. Acad. Sci. U.S.A.">
        <title>Analysis of phosphorylation sites on proteins from Saccharomyces cerevisiae by electron transfer dissociation (ETD) mass spectrometry.</title>
        <authorList>
            <person name="Chi A."/>
            <person name="Huttenhower C."/>
            <person name="Geer L.Y."/>
            <person name="Coon J.J."/>
            <person name="Syka J.E.P."/>
            <person name="Bai D.L."/>
            <person name="Shabanowitz J."/>
            <person name="Burke D.J."/>
            <person name="Troyanskaya O.G."/>
            <person name="Hunt D.F."/>
        </authorList>
    </citation>
    <scope>PHOSPHORYLATION [LARGE SCALE ANALYSIS] AT SER-837; SER-840 AND SER-841</scope>
    <scope>IDENTIFICATION BY MASS SPECTROMETRY [LARGE SCALE ANALYSIS]</scope>
</reference>
<reference key="75">
    <citation type="journal article" date="2008" name="Mol. Cell. Proteomics">
        <title>A multidimensional chromatography technology for in-depth phosphoproteome analysis.</title>
        <authorList>
            <person name="Albuquerque C.P."/>
            <person name="Smolka M.B."/>
            <person name="Payne S.H."/>
            <person name="Bafna V."/>
            <person name="Eng J."/>
            <person name="Zhou H."/>
        </authorList>
    </citation>
    <scope>PHOSPHORYLATION [LARGE SCALE ANALYSIS] AT SER-837; SER-849 AND SER-850</scope>
    <scope>IDENTIFICATION BY MASS SPECTROMETRY [LARGE SCALE ANALYSIS]</scope>
</reference>
<reference key="76">
    <citation type="journal article" date="2009" name="Science">
        <title>Global analysis of Cdk1 substrate phosphorylation sites provides insights into evolution.</title>
        <authorList>
            <person name="Holt L.J."/>
            <person name="Tuch B.B."/>
            <person name="Villen J."/>
            <person name="Johnson A.D."/>
            <person name="Gygi S.P."/>
            <person name="Morgan D.O."/>
        </authorList>
    </citation>
    <scope>PHOSPHORYLATION [LARGE SCALE ANALYSIS] AT SER-22; THR-51; SER-54; SER-58; SER-849; SER-850 AND SER-854</scope>
    <scope>IDENTIFICATION BY MASS SPECTROMETRY [LARGE SCALE ANALYSIS]</scope>
</reference>
<keyword id="KW-0002">3D-structure</keyword>
<keyword id="KW-0046">Antibiotic resistance</keyword>
<keyword id="KW-0067">ATP-binding</keyword>
<keyword id="KW-1003">Cell membrane</keyword>
<keyword id="KW-0196">Cycloheximide resistance</keyword>
<keyword id="KW-0903">Direct protein sequencing</keyword>
<keyword id="KW-0325">Glycoprotein</keyword>
<keyword id="KW-1017">Isopeptide bond</keyword>
<keyword id="KW-0472">Membrane</keyword>
<keyword id="KW-0547">Nucleotide-binding</keyword>
<keyword id="KW-0597">Phosphoprotein</keyword>
<keyword id="KW-1185">Reference proteome</keyword>
<keyword id="KW-0677">Repeat</keyword>
<keyword id="KW-0812">Transmembrane</keyword>
<keyword id="KW-1133">Transmembrane helix</keyword>
<keyword id="KW-0813">Transport</keyword>
<keyword id="KW-0832">Ubl conjugation</keyword>
<proteinExistence type="evidence at protein level"/>
<gene>
    <name type="primary">PDR5</name>
    <name type="synonym">LEM1</name>
    <name type="synonym">STS1</name>
    <name type="synonym">YDR1</name>
    <name type="ordered locus">YOR153W</name>
</gene>
<protein>
    <recommendedName>
        <fullName>Pleiotropic ABC efflux transporter of multiple drugs</fullName>
    </recommendedName>
    <alternativeName>
        <fullName>Pleiotropic drug resistance protein 5</fullName>
    </alternativeName>
    <alternativeName>
        <fullName>Suppressor of toxicity of sporidesmin</fullName>
    </alternativeName>
</protein>
<sequence length="1511" mass="170438">MPEAKLNNNVNDVTSYSSASSSTENAADLHNYNGFDEHTEARIQKLARTLTAQSMQNSTQSAPNKSDAQSIFSSGVEGVNPIFSDPEAPGYDPKLDPNSENFSSAAWVKNMAHLSAADPDFYKPYSLGCAWKNLSASGASADVAYQSTVVNIPYKILKSGLRKFQRSKETNTFQILKPMDGCLNPGELLVVLGRPGSGCTTLLKSISSNTHGFDLGADTKISYSGYSGDDIKKHFRGEVVYNAEADVHLPHLTVFETLVTVARLKTPQNRIKGVDRESYANHLAEVAMATYGLSHTRNTKVGNDIVRGVSGGERKRVSIAEVSICGSKFQCWDNATRGLDSATALEFIRALKTQADISNTSATVAIYQCSQDAYDLFNKVCVLDDGYQIYYGPADKAKKYFEDMGYVCPSRQTTADFLTSVTSPSERTLNKDMLKKGIHIPQTPKEMNDYWVKSPNYKELMKEVDQRLLNDDEASREAIKEAHIAKQSKRARPSSPYTVSYMMQVKYLLIRNMWRLRNNIGFTLFMILGNCSMALILGSMFFKIMKKGDTSTFYFRGSAMFFAILFNAFSSLLEIFSLYEARPITEKHRTYSLYHPSADAFASVLSEIPSKLIIAVCFNIIFYFLVDFRRNGGVFFFYLLINIVAVFSMSHLFRCVGSLTKTLSEAMVPASMLLLALSMYTGFAIPKKKILRWSKWIWYINPLAYLFESLLINEFHGIKFPCAEYVPRGPAYANISSTESVCTVVGAVPGQDYVLGDDFIRGTYQYYHKDKWRGFGIGMAYVVFFFFVYLFLCEYNEGAKQKGEILVFPRSIVKRMKKRGVLTEKNANDPENVGERSDLSSDRKMLQESSEEESDTYGEIGLSKSEAIFHWRNLCYEVQIKAETRRILNNVDGWVKPGTLTALMGASGAGKTTLLDCLAERVTMGVITGDILVNGIPRDKSFPRSIGYCQQQDLHLKTATVRESLRFSAYLRQPAEVSIEEKNRYVEEVIKILEMEKYADAVVGVAGEGLNVEQRKRLTIGVELTAKPKLLVFLDEPTSGLDSQTAWSICQLMKKLANHGQAILCTIHQPSAILMQEFDRLLFMQRGGKTVYFGDLGEGCKTMIDYFESHGAHKCPADANPAEWMLEVVGAAPGSHANQDYYEVWRNSEEYRAVQSELDWMERELPKKGSITAAEDKHEFSQSIIYQTKLVSIRLFQQYWRSPDYLWSKFILTIFNQLFIGFTFFKAGTSLQGLQNQMLAVFMFTVIFNPILQQYLPSFVQQRDLYEARERPSRTFSWISFIFAQIFVEVPWNILAGTIAYFIYYYPIGFYSNASAAGQLHERGALFWLFSCAFYVYVGSMGLLVISFNQVAESAANLASLLFTMSLSFCGVMTTPSAMPRFWIFMYRVSPLTYFIQALLAVGVANVDVKCADYELLEFTPPSGMTCGQYMEPYLQLAKTGYLTDENATDTCSFCQISTTNDYLANVNSFYSERWRNYGIFICYIAFNYIAGVFFYWLARVPKKNGKLSKK</sequence>
<organism>
    <name type="scientific">Saccharomyces cerevisiae (strain ATCC 204508 / S288c)</name>
    <name type="common">Baker's yeast</name>
    <dbReference type="NCBI Taxonomy" id="559292"/>
    <lineage>
        <taxon>Eukaryota</taxon>
        <taxon>Fungi</taxon>
        <taxon>Dikarya</taxon>
        <taxon>Ascomycota</taxon>
        <taxon>Saccharomycotina</taxon>
        <taxon>Saccharomycetes</taxon>
        <taxon>Saccharomycetales</taxon>
        <taxon>Saccharomycetaceae</taxon>
        <taxon>Saccharomyces</taxon>
    </lineage>
</organism>
<accession>P33302</accession>
<accession>D6W2L0</accession>
<feature type="chain" id="PRO_0000093442" description="Pleiotropic ABC efflux transporter of multiple drugs">
    <location>
        <begin position="1"/>
        <end position="1511"/>
    </location>
</feature>
<feature type="topological domain" description="Cytoplasmic" evidence="1">
    <location>
        <begin position="1"/>
        <end position="517"/>
    </location>
</feature>
<feature type="transmembrane region" description="Helical" evidence="1">
    <location>
        <begin position="518"/>
        <end position="542"/>
    </location>
</feature>
<feature type="topological domain" description="Extracellular" evidence="1">
    <location>
        <begin position="543"/>
        <end position="558"/>
    </location>
</feature>
<feature type="transmembrane region" description="Helical" evidence="1">
    <location>
        <begin position="559"/>
        <end position="579"/>
    </location>
</feature>
<feature type="topological domain" description="Cytoplasmic" evidence="1">
    <location>
        <begin position="580"/>
        <end position="611"/>
    </location>
</feature>
<feature type="transmembrane region" description="Helical" evidence="1">
    <location>
        <begin position="612"/>
        <end position="628"/>
    </location>
</feature>
<feature type="topological domain" description="Extracellular" evidence="1">
    <location>
        <begin position="629"/>
        <end position="631"/>
    </location>
</feature>
<feature type="transmembrane region" description="Helical" evidence="1">
    <location>
        <begin position="632"/>
        <end position="650"/>
    </location>
</feature>
<feature type="topological domain" description="Cytoplasmic" evidence="1">
    <location>
        <begin position="651"/>
        <end position="665"/>
    </location>
</feature>
<feature type="transmembrane region" description="Helical" evidence="1">
    <location>
        <begin position="666"/>
        <end position="685"/>
    </location>
</feature>
<feature type="topological domain" description="Extracellular" evidence="1">
    <location>
        <begin position="686"/>
        <end position="774"/>
    </location>
</feature>
<feature type="transmembrane region" description="Helical" evidence="1">
    <location>
        <begin position="775"/>
        <end position="793"/>
    </location>
</feature>
<feature type="topological domain" description="Cytoplasmic" evidence="1">
    <location>
        <begin position="794"/>
        <end position="1237"/>
    </location>
</feature>
<feature type="transmembrane region" description="Helical" evidence="1">
    <location>
        <begin position="1238"/>
        <end position="1260"/>
    </location>
</feature>
<feature type="topological domain" description="Extracellular" evidence="1">
    <location>
        <begin position="1261"/>
        <end position="1291"/>
    </location>
</feature>
<feature type="transmembrane region" description="Helical" evidence="1">
    <location>
        <begin position="1292"/>
        <end position="1313"/>
    </location>
</feature>
<feature type="topological domain" description="Cytoplasmic" evidence="1">
    <location>
        <begin position="1314"/>
        <end position="1324"/>
    </location>
</feature>
<feature type="transmembrane region" description="Helical" evidence="1">
    <location>
        <begin position="1325"/>
        <end position="1349"/>
    </location>
</feature>
<feature type="topological domain" description="Extracellular" evidence="1">
    <location>
        <begin position="1350"/>
        <end position="1354"/>
    </location>
</feature>
<feature type="transmembrane region" description="Helical" evidence="1">
    <location>
        <begin position="1355"/>
        <end position="1379"/>
    </location>
</feature>
<feature type="topological domain" description="Cytoplasmic" evidence="1">
    <location>
        <begin position="1380"/>
        <end position="1388"/>
    </location>
</feature>
<feature type="transmembrane region" description="Helical" evidence="1">
    <location>
        <begin position="1389"/>
        <end position="1407"/>
    </location>
</feature>
<feature type="topological domain" description="Extracellular" evidence="1">
    <location>
        <begin position="1408"/>
        <end position="1476"/>
    </location>
</feature>
<feature type="transmembrane region" description="Helical" evidence="1">
    <location>
        <begin position="1477"/>
        <end position="1499"/>
    </location>
</feature>
<feature type="topological domain" description="Cytoplasmic" evidence="1">
    <location>
        <begin position="1500"/>
        <end position="1511"/>
    </location>
</feature>
<feature type="domain" description="ABC transporter 1" evidence="2">
    <location>
        <begin position="161"/>
        <end position="410"/>
    </location>
</feature>
<feature type="domain" description="ABC transporter 2" evidence="2">
    <location>
        <begin position="869"/>
        <end position="1112"/>
    </location>
</feature>
<feature type="region of interest" description="Disordered" evidence="3">
    <location>
        <begin position="1"/>
        <end position="32"/>
    </location>
</feature>
<feature type="region of interest" description="Disordered" evidence="3">
    <location>
        <begin position="52"/>
        <end position="71"/>
    </location>
</feature>
<feature type="region of interest" description="Disordered" evidence="3">
    <location>
        <begin position="824"/>
        <end position="858"/>
    </location>
</feature>
<feature type="compositionally biased region" description="Polar residues" evidence="3">
    <location>
        <begin position="1"/>
        <end position="14"/>
    </location>
</feature>
<feature type="compositionally biased region" description="Basic and acidic residues" evidence="3">
    <location>
        <begin position="833"/>
        <end position="846"/>
    </location>
</feature>
<feature type="binding site" evidence="2">
    <location>
        <begin position="905"/>
        <end position="912"/>
    </location>
    <ligand>
        <name>ATP</name>
        <dbReference type="ChEBI" id="CHEBI:30616"/>
    </ligand>
</feature>
<feature type="modified residue" description="Phosphoserine" evidence="38">
    <location>
        <position position="22"/>
    </location>
</feature>
<feature type="modified residue" description="Phosphothreonine" evidence="36">
    <location>
        <position position="49"/>
    </location>
</feature>
<feature type="modified residue" description="Phosphothreonine" evidence="38">
    <location>
        <position position="51"/>
    </location>
</feature>
<feature type="modified residue" description="Phosphoserine" evidence="36 38">
    <location>
        <position position="54"/>
    </location>
</feature>
<feature type="modified residue" description="Phosphoserine" evidence="38">
    <location>
        <position position="58"/>
    </location>
</feature>
<feature type="modified residue" description="Phosphoserine" evidence="36">
    <location>
        <position position="61"/>
    </location>
</feature>
<feature type="modified residue" description="Phosphoserine" evidence="35 36 37">
    <location>
        <position position="837"/>
    </location>
</feature>
<feature type="modified residue" description="Phosphoserine" evidence="35">
    <location>
        <position position="840"/>
    </location>
</feature>
<feature type="modified residue" description="Phosphoserine" evidence="35">
    <location>
        <position position="841"/>
    </location>
</feature>
<feature type="modified residue" description="Phosphoserine" evidence="36 37 38">
    <location>
        <position position="849"/>
    </location>
</feature>
<feature type="modified residue" description="Phosphoserine" evidence="36 37 38">
    <location>
        <position position="850"/>
    </location>
</feature>
<feature type="modified residue" description="Phosphoserine" evidence="36 38">
    <location>
        <position position="854"/>
    </location>
</feature>
<feature type="glycosylation site" description="N-linked (GlcNAc...) asparagine" evidence="1">
    <location>
        <position position="734"/>
    </location>
</feature>
<feature type="glycosylation site" description="N-linked (GlcNAc...) asparagine" evidence="1">
    <location>
        <position position="1447"/>
    </location>
</feature>
<feature type="cross-link" description="Glycyl lysine isopeptide (Lys-Gly) (interchain with G-Cter in ubiquitin)" evidence="9 12">
    <location>
        <position position="825"/>
    </location>
</feature>
<feature type="mutagenesis site" description="Activates ER-associated degradation.">
    <original>L</original>
    <variation>P</variation>
    <location>
        <position position="183"/>
    </location>
</feature>
<feature type="mutagenesis site" description="Alters drug specificity.">
    <original>T</original>
    <variation>I</variation>
    <location>
        <position position="257"/>
    </location>
</feature>
<feature type="mutagenesis site" description="Confers generalized drug resistance.">
    <original>G</original>
    <variation>D</variation>
    <location>
        <position position="302"/>
    </location>
</feature>
<feature type="mutagenesis site" description="Alters drug specificity.">
    <original>S</original>
    <variation>F</variation>
    <location>
        <position position="648"/>
    </location>
</feature>
<feature type="mutagenesis site" description="Inactivates drug transport.">
    <original>G</original>
    <variation>S</variation>
    <location>
        <position position="905"/>
    </location>
</feature>
<feature type="mutagenesis site" description="Inactivates drug transport.">
    <original>G</original>
    <variation>S</variation>
    <location>
        <position position="908"/>
    </location>
</feature>
<feature type="mutagenesis site" description="Confers generalized drug resistance.">
    <original>G</original>
    <variation>C</variation>
    <location>
        <position position="1009"/>
    </location>
</feature>
<feature type="mutagenesis site" description="Alters drug specificity.">
    <original>G</original>
    <variation>D</variation>
    <location>
        <position position="1040"/>
    </location>
</feature>
<feature type="mutagenesis site" description="Alters drug specificity.">
    <original>S</original>
    <variation>V</variation>
    <location>
        <position position="1048"/>
    </location>
</feature>
<feature type="mutagenesis site" description="Alters drug specificity.">
    <original>E</original>
    <variation>K</variation>
    <location>
        <position position="1289"/>
    </location>
</feature>
<feature type="mutagenesis site" description="Alters drug specificity.">
    <original>Y</original>
    <variation>S</variation>
    <location>
        <position position="1311"/>
    </location>
</feature>
<feature type="mutagenesis site" description="Alters drug specificity.">
    <original>S</original>
    <variation>F</variation>
    <location>
        <position position="1360"/>
    </location>
</feature>
<feature type="mutagenesis site" description="Alters drug specificity.">
    <original>T</original>
    <variation>I</variation>
    <location>
        <position position="1393"/>
    </location>
</feature>
<feature type="mutagenesis site" description="Activates ER-associated degradation.">
    <original>C</original>
    <variation>Y</variation>
    <location>
        <position position="1427"/>
    </location>
</feature>
<feature type="sequence conflict" description="In Ref. 1; BAA05547." evidence="34" ref="1">
    <original>N</original>
    <variation>L</variation>
    <location>
        <position position="171"/>
    </location>
</feature>
<feature type="sequence conflict" description="In Ref. 1; BAA05547." evidence="34" ref="1">
    <original>V</original>
    <variation>I</variation>
    <location>
        <position position="190"/>
    </location>
</feature>
<feature type="sequence conflict" description="In Ref. 1; BAA05547." evidence="34" ref="1">
    <original>D</original>
    <variation>T</variation>
    <location>
        <position position="214"/>
    </location>
</feature>
<feature type="sequence conflict" description="In Ref. 1; BAA05547." evidence="34" ref="1">
    <original>G</original>
    <variation>V</variation>
    <location>
        <position position="308"/>
    </location>
</feature>
<feature type="sequence conflict" description="In Ref. 1; BAA05547." evidence="34" ref="1">
    <location>
        <begin position="340"/>
        <end position="345"/>
    </location>
</feature>
<feature type="sequence conflict" description="In Ref. 1; BAA05547." evidence="34" ref="1">
    <original>R</original>
    <variation>H</variation>
    <location>
        <position position="476"/>
    </location>
</feature>
<feature type="sequence conflict" description="In Ref. 1; BAA05547." evidence="34" ref="1">
    <location>
        <position position="648"/>
    </location>
</feature>
<feature type="sequence conflict" description="In Ref. 1; BAA05547." evidence="34" ref="1">
    <original>D</original>
    <variation>H</variation>
    <location>
        <position position="770"/>
    </location>
</feature>
<feature type="helix" evidence="40">
    <location>
        <begin position="37"/>
        <end position="55"/>
    </location>
</feature>
<feature type="helix" evidence="40">
    <location>
        <begin position="93"/>
        <end position="95"/>
    </location>
</feature>
<feature type="strand" evidence="40">
    <location>
        <begin position="97"/>
        <end position="101"/>
    </location>
</feature>
<feature type="helix" evidence="40">
    <location>
        <begin position="104"/>
        <end position="116"/>
    </location>
</feature>
<feature type="strand" evidence="40">
    <location>
        <begin position="129"/>
        <end position="133"/>
    </location>
</feature>
<feature type="strand" evidence="40">
    <location>
        <begin position="136"/>
        <end position="139"/>
    </location>
</feature>
<feature type="turn" evidence="40">
    <location>
        <begin position="149"/>
        <end position="151"/>
    </location>
</feature>
<feature type="helix" evidence="40">
    <location>
        <begin position="152"/>
        <end position="164"/>
    </location>
</feature>
<feature type="strand" evidence="40">
    <location>
        <begin position="172"/>
        <end position="176"/>
    </location>
</feature>
<feature type="strand" evidence="40">
    <location>
        <begin position="180"/>
        <end position="183"/>
    </location>
</feature>
<feature type="strand" evidence="40">
    <location>
        <begin position="188"/>
        <end position="192"/>
    </location>
</feature>
<feature type="helix" evidence="40">
    <location>
        <begin position="199"/>
        <end position="206"/>
    </location>
</feature>
<feature type="strand" evidence="40">
    <location>
        <begin position="212"/>
        <end position="215"/>
    </location>
</feature>
<feature type="strand" evidence="40">
    <location>
        <begin position="220"/>
        <end position="223"/>
    </location>
</feature>
<feature type="helix" evidence="40">
    <location>
        <begin position="228"/>
        <end position="231"/>
    </location>
</feature>
<feature type="turn" evidence="41">
    <location>
        <begin position="234"/>
        <end position="237"/>
    </location>
</feature>
<feature type="strand" evidence="40">
    <location>
        <begin position="238"/>
        <end position="243"/>
    </location>
</feature>
<feature type="helix" evidence="40">
    <location>
        <begin position="254"/>
        <end position="264"/>
    </location>
</feature>
<feature type="turn" evidence="40">
    <location>
        <begin position="268"/>
        <end position="270"/>
    </location>
</feature>
<feature type="helix" evidence="40">
    <location>
        <begin position="276"/>
        <end position="290"/>
    </location>
</feature>
<feature type="helix" evidence="40">
    <location>
        <begin position="294"/>
        <end position="296"/>
    </location>
</feature>
<feature type="strand" evidence="40">
    <location>
        <begin position="304"/>
        <end position="306"/>
    </location>
</feature>
<feature type="helix" evidence="40">
    <location>
        <begin position="311"/>
        <end position="325"/>
    </location>
</feature>
<feature type="strand" evidence="40">
    <location>
        <begin position="328"/>
        <end position="332"/>
    </location>
</feature>
<feature type="turn" evidence="40">
    <location>
        <begin position="333"/>
        <end position="338"/>
    </location>
</feature>
<feature type="helix" evidence="40">
    <location>
        <begin position="341"/>
        <end position="358"/>
    </location>
</feature>
<feature type="strand" evidence="40">
    <location>
        <begin position="361"/>
        <end position="365"/>
    </location>
</feature>
<feature type="helix" evidence="40">
    <location>
        <begin position="371"/>
        <end position="375"/>
    </location>
</feature>
<feature type="strand" evidence="40">
    <location>
        <begin position="378"/>
        <end position="384"/>
    </location>
</feature>
<feature type="strand" evidence="40">
    <location>
        <begin position="387"/>
        <end position="393"/>
    </location>
</feature>
<feature type="helix" evidence="40">
    <location>
        <begin position="394"/>
        <end position="404"/>
    </location>
</feature>
<feature type="helix" evidence="40">
    <location>
        <begin position="414"/>
        <end position="420"/>
    </location>
</feature>
<feature type="turn" evidence="40">
    <location>
        <begin position="424"/>
        <end position="426"/>
    </location>
</feature>
<feature type="helix" evidence="40">
    <location>
        <begin position="431"/>
        <end position="435"/>
    </location>
</feature>
<feature type="helix" evidence="40">
    <location>
        <begin position="444"/>
        <end position="453"/>
    </location>
</feature>
<feature type="helix" evidence="40">
    <location>
        <begin position="455"/>
        <end position="469"/>
    </location>
</feature>
<feature type="helix" evidence="40">
    <location>
        <begin position="501"/>
        <end position="518"/>
    </location>
</feature>
<feature type="helix" evidence="40">
    <location>
        <begin position="520"/>
        <end position="540"/>
    </location>
</feature>
<feature type="turn" evidence="40">
    <location>
        <begin position="541"/>
        <end position="544"/>
    </location>
</feature>
<feature type="strand" evidence="40">
    <location>
        <begin position="545"/>
        <end position="547"/>
    </location>
</feature>
<feature type="helix" evidence="40">
    <location>
        <begin position="550"/>
        <end position="552"/>
    </location>
</feature>
<feature type="helix" evidence="40">
    <location>
        <begin position="553"/>
        <end position="570"/>
    </location>
</feature>
<feature type="helix" evidence="40">
    <location>
        <begin position="571"/>
        <end position="574"/>
    </location>
</feature>
<feature type="helix" evidence="40">
    <location>
        <begin position="575"/>
        <end position="590"/>
    </location>
</feature>
<feature type="turn" evidence="40">
    <location>
        <begin position="591"/>
        <end position="593"/>
    </location>
</feature>
<feature type="helix" evidence="40">
    <location>
        <begin position="596"/>
        <end position="606"/>
    </location>
</feature>
<feature type="helix" evidence="40">
    <location>
        <begin position="608"/>
        <end position="626"/>
    </location>
</feature>
<feature type="helix" evidence="40">
    <location>
        <begin position="632"/>
        <end position="659"/>
    </location>
</feature>
<feature type="strand" evidence="41">
    <location>
        <begin position="660"/>
        <end position="662"/>
    </location>
</feature>
<feature type="helix" evidence="40">
    <location>
        <begin position="663"/>
        <end position="679"/>
    </location>
</feature>
<feature type="strand" evidence="40">
    <location>
        <begin position="681"/>
        <end position="685"/>
    </location>
</feature>
<feature type="turn" evidence="40">
    <location>
        <begin position="687"/>
        <end position="689"/>
    </location>
</feature>
<feature type="helix" evidence="40">
    <location>
        <begin position="692"/>
        <end position="694"/>
    </location>
</feature>
<feature type="helix" evidence="40">
    <location>
        <begin position="695"/>
        <end position="700"/>
    </location>
</feature>
<feature type="helix" evidence="40">
    <location>
        <begin position="702"/>
        <end position="715"/>
    </location>
</feature>
<feature type="strand" evidence="40">
    <location>
        <begin position="719"/>
        <end position="721"/>
    </location>
</feature>
<feature type="strand" evidence="40">
    <location>
        <begin position="725"/>
        <end position="727"/>
    </location>
</feature>
<feature type="helix" evidence="40">
    <location>
        <begin position="730"/>
        <end position="732"/>
    </location>
</feature>
<feature type="helix" evidence="40">
    <location>
        <begin position="737"/>
        <end position="739"/>
    </location>
</feature>
<feature type="strand" evidence="40">
    <location>
        <begin position="742"/>
        <end position="744"/>
    </location>
</feature>
<feature type="strand" evidence="40">
    <location>
        <begin position="752"/>
        <end position="755"/>
    </location>
</feature>
<feature type="helix" evidence="40">
    <location>
        <begin position="756"/>
        <end position="763"/>
    </location>
</feature>
<feature type="helix" evidence="40">
    <location>
        <begin position="768"/>
        <end position="770"/>
    </location>
</feature>
<feature type="helix" evidence="40">
    <location>
        <begin position="773"/>
        <end position="795"/>
    </location>
</feature>
<feature type="helix" evidence="40">
    <location>
        <begin position="810"/>
        <end position="815"/>
    </location>
</feature>
<feature type="strand" evidence="40">
    <location>
        <begin position="869"/>
        <end position="882"/>
    </location>
</feature>
<feature type="strand" evidence="40">
    <location>
        <begin position="885"/>
        <end position="895"/>
    </location>
</feature>
<feature type="strand" evidence="40">
    <location>
        <begin position="900"/>
        <end position="904"/>
    </location>
</feature>
<feature type="strand" evidence="40">
    <location>
        <begin position="906"/>
        <end position="908"/>
    </location>
</feature>
<feature type="helix" evidence="40">
    <location>
        <begin position="911"/>
        <end position="918"/>
    </location>
</feature>
<feature type="strand" evidence="40">
    <location>
        <begin position="924"/>
        <end position="933"/>
    </location>
</feature>
<feature type="helix" evidence="40">
    <location>
        <begin position="942"/>
        <end position="944"/>
    </location>
</feature>
<feature type="strand" evidence="40">
    <location>
        <begin position="946"/>
        <end position="949"/>
    </location>
</feature>
<feature type="helix" evidence="40">
    <location>
        <begin position="961"/>
        <end position="972"/>
    </location>
</feature>
<feature type="strand" evidence="39">
    <location>
        <begin position="975"/>
        <end position="977"/>
    </location>
</feature>
<feature type="helix" evidence="40">
    <location>
        <begin position="979"/>
        <end position="992"/>
    </location>
</feature>
<feature type="helix" evidence="41">
    <location>
        <begin position="996"/>
        <end position="998"/>
    </location>
</feature>
<feature type="strand" evidence="40">
    <location>
        <begin position="1006"/>
        <end position="1010"/>
    </location>
</feature>
<feature type="helix" evidence="40">
    <location>
        <begin position="1012"/>
        <end position="1024"/>
    </location>
</feature>
<feature type="strand" evidence="40">
    <location>
        <begin position="1029"/>
        <end position="1038"/>
    </location>
</feature>
<feature type="helix" evidence="40">
    <location>
        <begin position="1043"/>
        <end position="1059"/>
    </location>
</feature>
<feature type="strand" evidence="40">
    <location>
        <begin position="1063"/>
        <end position="1066"/>
    </location>
</feature>
<feature type="helix" evidence="40">
    <location>
        <begin position="1072"/>
        <end position="1076"/>
    </location>
</feature>
<feature type="strand" evidence="40">
    <location>
        <begin position="1079"/>
        <end position="1085"/>
    </location>
</feature>
<feature type="turn" evidence="40">
    <location>
        <begin position="1086"/>
        <end position="1088"/>
    </location>
</feature>
<feature type="strand" evidence="40">
    <location>
        <begin position="1089"/>
        <end position="1095"/>
    </location>
</feature>
<feature type="helix" evidence="40">
    <location>
        <begin position="1098"/>
        <end position="1100"/>
    </location>
</feature>
<feature type="helix" evidence="40">
    <location>
        <begin position="1101"/>
        <end position="1108"/>
    </location>
</feature>
<feature type="turn" evidence="40">
    <location>
        <begin position="1109"/>
        <end position="1111"/>
    </location>
</feature>
<feature type="helix" evidence="40">
    <location>
        <begin position="1121"/>
        <end position="1128"/>
    </location>
</feature>
<feature type="strand" evidence="40">
    <location>
        <begin position="1129"/>
        <end position="1134"/>
    </location>
</feature>
<feature type="helix" evidence="40">
    <location>
        <begin position="1141"/>
        <end position="1146"/>
    </location>
</feature>
<feature type="helix" evidence="40">
    <location>
        <begin position="1149"/>
        <end position="1163"/>
    </location>
</feature>
<feature type="strand" evidence="40">
    <location>
        <begin position="1180"/>
        <end position="1182"/>
    </location>
</feature>
<feature type="helix" evidence="40">
    <location>
        <begin position="1184"/>
        <end position="1199"/>
    </location>
</feature>
<feature type="helix" evidence="40">
    <location>
        <begin position="1203"/>
        <end position="1223"/>
    </location>
</feature>
<feature type="turn" evidence="41">
    <location>
        <begin position="1224"/>
        <end position="1226"/>
    </location>
</feature>
<feature type="helix" evidence="40">
    <location>
        <begin position="1231"/>
        <end position="1245"/>
    </location>
</feature>
<feature type="helix" evidence="40">
    <location>
        <begin position="1248"/>
        <end position="1268"/>
    </location>
</feature>
<feature type="turn" evidence="40">
    <location>
        <begin position="1269"/>
        <end position="1274"/>
    </location>
</feature>
<feature type="helix" evidence="40">
    <location>
        <begin position="1278"/>
        <end position="1305"/>
    </location>
</feature>
<feature type="turn" evidence="40">
    <location>
        <begin position="1306"/>
        <end position="1309"/>
    </location>
</feature>
<feature type="helix" evidence="40">
    <location>
        <begin position="1310"/>
        <end position="1316"/>
    </location>
</feature>
<feature type="helix" evidence="40">
    <location>
        <begin position="1320"/>
        <end position="1348"/>
    </location>
</feature>
<feature type="helix" evidence="40">
    <location>
        <begin position="1352"/>
        <end position="1368"/>
    </location>
</feature>
<feature type="strand" evidence="40">
    <location>
        <begin position="1370"/>
        <end position="1374"/>
    </location>
</feature>
<feature type="turn" evidence="40">
    <location>
        <begin position="1376"/>
        <end position="1378"/>
    </location>
</feature>
<feature type="helix" evidence="40">
    <location>
        <begin position="1381"/>
        <end position="1383"/>
    </location>
</feature>
<feature type="helix" evidence="40">
    <location>
        <begin position="1384"/>
        <end position="1389"/>
    </location>
</feature>
<feature type="helix" evidence="40">
    <location>
        <begin position="1391"/>
        <end position="1404"/>
    </location>
</feature>
<feature type="turn" evidence="40">
    <location>
        <begin position="1413"/>
        <end position="1415"/>
    </location>
</feature>
<feature type="strand" evidence="40">
    <location>
        <begin position="1416"/>
        <end position="1419"/>
    </location>
</feature>
<feature type="helix" evidence="40">
    <location>
        <begin position="1427"/>
        <end position="1437"/>
    </location>
</feature>
<feature type="strand" evidence="40">
    <location>
        <begin position="1442"/>
        <end position="1444"/>
    </location>
</feature>
<feature type="strand" evidence="40">
    <location>
        <begin position="1452"/>
        <end position="1456"/>
    </location>
</feature>
<feature type="helix" evidence="40">
    <location>
        <begin position="1460"/>
        <end position="1467"/>
    </location>
</feature>
<feature type="helix" evidence="40">
    <location>
        <begin position="1471"/>
        <end position="1473"/>
    </location>
</feature>
<feature type="helix" evidence="40">
    <location>
        <begin position="1474"/>
        <end position="1499"/>
    </location>
</feature>
<comment type="function">
    <text evidence="5 6 10 11 15 19 22 24 25 28 29 30 32 33">Active efflux of weakly charged organic compounds of 90 cubic Angstroms to 300 cubic Angstroms surface volume. Confers resistance to numerous chemicals including cycloheximide, sulfomethuron methyl, steroids, antiseptics, antibiotics, anticancer, herbicides, mycotoxins, insecticides, ionophores, alkaloids, flavonoids, phenothiazines, organotin compounds, carbazoles, lysosomotropic aminoesters, detergents, rhodamines and other fluorophores, azoles and other antifungals. Exhibits nucleoside triphosphatase activity.</text>
</comment>
<comment type="activity regulation">
    <text>FK506, isonitrile, enniatin, RU49953, kitasatospora E420, staurosporine CGP42700, prenyl-flavonoids, D-octapeptides were found to be inhibitors in vivo. Vanadate and oligomycin were found to be inhibitors in vitro.</text>
</comment>
<comment type="biophysicochemical properties">
    <kinetics>
        <KM evidence="26">0.5 mM for MgATP</KM>
        <Vmax evidence="26">2.5 umol/min/mg enzyme</Vmax>
        <text>Activity measured in plasma membranes.</text>
    </kinetics>
    <phDependence>
        <text evidence="26">Optimum pH is 7.0.</text>
    </phDependence>
</comment>
<comment type="interaction">
    <interactant intactId="EBI-13038">
        <id>P33302</id>
    </interactant>
    <interactant intactId="EBI-8759">
        <id>P32465</id>
        <label>HXT1</label>
    </interactant>
    <organismsDiffer>false</organismsDiffer>
    <experiments>3</experiments>
</comment>
<comment type="interaction">
    <interactant intactId="EBI-13038">
        <id>P33302</id>
    </interactant>
    <interactant intactId="EBI-32032">
        <id>Q12200</id>
        <label>NCR1</label>
    </interactant>
    <organismsDiffer>false</organismsDiffer>
    <experiments>2</experiments>
</comment>
<comment type="interaction">
    <interactant intactId="EBI-13038">
        <id>P33302</id>
    </interactant>
    <interactant intactId="EBI-13065">
        <id>Q02785</id>
        <label>PDR12</label>
    </interactant>
    <organismsDiffer>false</organismsDiffer>
    <experiments>3</experiments>
</comment>
<comment type="interaction">
    <interactant intactId="EBI-13038">
        <id>P33302</id>
    </interactant>
    <interactant intactId="EBI-13038">
        <id>P33302</id>
        <label>PDR5</label>
    </interactant>
    <organismsDiffer>false</organismsDiffer>
    <experiments>4</experiments>
</comment>
<comment type="interaction">
    <interactant intactId="EBI-13038">
        <id>P33302</id>
    </interactant>
    <interactant intactId="EBI-17590">
        <id>P32568</id>
        <label>SNQ2</label>
    </interactant>
    <organismsDiffer>false</organismsDiffer>
    <experiments>5</experiments>
</comment>
<comment type="interaction">
    <interactant intactId="EBI-13038">
        <id>P33302</id>
    </interactant>
    <interactant intactId="EBI-20799372">
        <id>P40062</id>
        <label>YER097W</label>
    </interactant>
    <organismsDiffer>false</organismsDiffer>
    <experiments>2</experiments>
</comment>
<comment type="interaction">
    <interactant intactId="EBI-13038">
        <id>P33302</id>
    </interactant>
    <interactant intactId="EBI-29278">
        <id>Q08234</id>
        <label>YOL075C</label>
    </interactant>
    <organismsDiffer>false</organismsDiffer>
    <experiments>3</experiments>
</comment>
<comment type="interaction">
    <interactant intactId="EBI-13038">
        <id>P33302</id>
    </interactant>
    <interactant intactId="EBI-29677">
        <id>P32804</id>
        <label>ZRT1</label>
    </interactant>
    <organismsDiffer>false</organismsDiffer>
    <experiments>2</experiments>
</comment>
<comment type="subcellular location">
    <subcellularLocation>
        <location evidence="8">Cell membrane</location>
        <topology evidence="8">Multi-pass membrane protein</topology>
    </subcellularLocation>
    <text>The ERAD mutants 'Pro-183' and 'Tyr-1427' fail to reach the plasma membrane. The mutant 'Pro-183' accumulates into ER-associated compartments.</text>
</comment>
<comment type="induction">
    <text evidence="17 18 20 21 23 31">Expressed during exponential growth. Transcription is transiently activated within 40 minutes after induction by benomyl and other toxic chemicals. Multidrug resistance and PDR5 mRNA level are activated by the transcription regulators PDR1, PDR3, YAP1, YAP2, STB5 and by the mitochondrial rho zero mutation. Mutations or deletion in the PDR1 or PDR3 transcription factors strongly activate PDR5 mRNA and PDR5 translation. The transcription regulator RDR1 represses PDR5 expression.</text>
</comment>
<comment type="domain">
    <text evidence="27">The N-terminal ABC transporter domain (positions 161 to 410) contains degenerated Walker A and B ATP-binding motifs, suggesting that it may be less efficient in ATP binding or not functional at all. This is a distinctive feature of the PDR subfamily.</text>
</comment>
<comment type="domain">
    <text evidence="27">The unusual length of the two extracellular loops at positions 686 to 774 and 1408 to 1476 is another specific feature of the PDR subfamily which may have an important role for function.</text>
</comment>
<comment type="PTM">
    <text evidence="4">Ubiquitinylation mediates endocytosis and vacuolar degradation. Phosphorylation by casein kinase I stabilizes the protein half-life.</text>
</comment>
<comment type="biotechnology">
    <text evidence="7 14 16">Strains lacking PDR5 are used for toxicity tests. Strains overexpressing PDR5 are used for screening antifungal sensitizers.</text>
</comment>
<comment type="miscellaneous">
    <text evidence="13">Present with 42000 molecules/cell in log phase SD medium in log phase SD medium.</text>
</comment>
<comment type="miscellaneous">
    <text>Full-sized PDR5 orthologs are found only in fungi and plants. Their topology and substrate specificity are distinct from mammalian MDR transporters.</text>
</comment>
<comment type="similarity">
    <text evidence="34">Belongs to the ABC transporter superfamily. ABCG family. PDR (TC 3.A.1.205) subfamily.</text>
</comment>
<comment type="sequence caution" evidence="34">
    <conflict type="frameshift">
        <sequence resource="EMBL-CDS" id="BAA05547"/>
    </conflict>
</comment>
<dbReference type="EMBL" id="D26548">
    <property type="protein sequence ID" value="BAA05547.1"/>
    <property type="status" value="ALT_FRAME"/>
    <property type="molecule type" value="Genomic_DNA"/>
</dbReference>
<dbReference type="EMBL" id="X74113">
    <property type="protein sequence ID" value="CAA52212.1"/>
    <property type="molecule type" value="Genomic_DNA"/>
</dbReference>
<dbReference type="EMBL" id="L19922">
    <property type="protein sequence ID" value="AAB53769.1"/>
    <property type="molecule type" value="Genomic_DNA"/>
</dbReference>
<dbReference type="EMBL" id="U55020">
    <property type="protein sequence ID" value="AAC49639.1"/>
    <property type="molecule type" value="Genomic_DNA"/>
</dbReference>
<dbReference type="EMBL" id="Z75061">
    <property type="protein sequence ID" value="CAA99359.1"/>
    <property type="molecule type" value="Genomic_DNA"/>
</dbReference>
<dbReference type="EMBL" id="BK006948">
    <property type="protein sequence ID" value="DAA10926.1"/>
    <property type="molecule type" value="Genomic_DNA"/>
</dbReference>
<dbReference type="PIR" id="A53151">
    <property type="entry name" value="A53151"/>
</dbReference>
<dbReference type="RefSeq" id="NP_014796.3">
    <property type="nucleotide sequence ID" value="NM_001183572.3"/>
</dbReference>
<dbReference type="PDB" id="7P03">
    <property type="method" value="EM"/>
    <property type="resolution" value="3.45 A"/>
    <property type="chains" value="A=1-1511"/>
</dbReference>
<dbReference type="PDB" id="7P04">
    <property type="method" value="EM"/>
    <property type="resolution" value="2.85 A"/>
    <property type="chains" value="A=1-1511"/>
</dbReference>
<dbReference type="PDB" id="7P05">
    <property type="method" value="EM"/>
    <property type="resolution" value="3.13 A"/>
    <property type="chains" value="A=1-1511"/>
</dbReference>
<dbReference type="PDB" id="7P06">
    <property type="method" value="EM"/>
    <property type="resolution" value="3.77 A"/>
    <property type="chains" value="A=1-1511"/>
</dbReference>
<dbReference type="PDBsum" id="7P03"/>
<dbReference type="PDBsum" id="7P04"/>
<dbReference type="PDBsum" id="7P05"/>
<dbReference type="PDBsum" id="7P06"/>
<dbReference type="EMDB" id="EMD-13142"/>
<dbReference type="EMDB" id="EMD-13143"/>
<dbReference type="EMDB" id="EMD-13144"/>
<dbReference type="EMDB" id="EMD-13145"/>
<dbReference type="SMR" id="P33302"/>
<dbReference type="BioGRID" id="34549">
    <property type="interactions" value="168"/>
</dbReference>
<dbReference type="DIP" id="DIP-6776N"/>
<dbReference type="FunCoup" id="P33302">
    <property type="interactions" value="495"/>
</dbReference>
<dbReference type="IntAct" id="P33302">
    <property type="interactions" value="73"/>
</dbReference>
<dbReference type="MINT" id="P33302"/>
<dbReference type="STRING" id="4932.YOR153W"/>
<dbReference type="BindingDB" id="P33302"/>
<dbReference type="ChEMBL" id="CHEMBL1697658"/>
<dbReference type="DrugCentral" id="P33302"/>
<dbReference type="SwissLipids" id="SLP:000000523"/>
<dbReference type="TCDB" id="3.A.1.205.1">
    <property type="family name" value="the atp-binding cassette (abc) superfamily"/>
</dbReference>
<dbReference type="GlyCosmos" id="P33302">
    <property type="glycosylation" value="2 sites, No reported glycans"/>
</dbReference>
<dbReference type="GlyGen" id="P33302">
    <property type="glycosylation" value="2 sites"/>
</dbReference>
<dbReference type="iPTMnet" id="P33302"/>
<dbReference type="PaxDb" id="4932-YOR153W"/>
<dbReference type="PeptideAtlas" id="P33302"/>
<dbReference type="EnsemblFungi" id="YOR153W_mRNA">
    <property type="protein sequence ID" value="YOR153W"/>
    <property type="gene ID" value="YOR153W"/>
</dbReference>
<dbReference type="GeneID" id="854324"/>
<dbReference type="KEGG" id="sce:YOR153W"/>
<dbReference type="AGR" id="SGD:S000005679"/>
<dbReference type="SGD" id="S000005679">
    <property type="gene designation" value="PDR5"/>
</dbReference>
<dbReference type="VEuPathDB" id="FungiDB:YOR153W"/>
<dbReference type="eggNOG" id="KOG0065">
    <property type="taxonomic scope" value="Eukaryota"/>
</dbReference>
<dbReference type="GeneTree" id="ENSGT00940000176297"/>
<dbReference type="HOGENOM" id="CLU_000604_35_0_1"/>
<dbReference type="InParanoid" id="P33302"/>
<dbReference type="OMA" id="RTSMRHD"/>
<dbReference type="OrthoDB" id="245989at2759"/>
<dbReference type="BioCyc" id="YEAST:G3O-33670-MONOMER"/>
<dbReference type="BioGRID-ORCS" id="854324">
    <property type="hits" value="0 hits in 10 CRISPR screens"/>
</dbReference>
<dbReference type="PRO" id="PR:P33302"/>
<dbReference type="Proteomes" id="UP000002311">
    <property type="component" value="Chromosome XV"/>
</dbReference>
<dbReference type="RNAct" id="P33302">
    <property type="molecule type" value="protein"/>
</dbReference>
<dbReference type="GO" id="GO:0071944">
    <property type="term" value="C:cell periphery"/>
    <property type="evidence" value="ECO:0007005"/>
    <property type="project" value="SGD"/>
</dbReference>
<dbReference type="GO" id="GO:0005739">
    <property type="term" value="C:mitochondrion"/>
    <property type="evidence" value="ECO:0007005"/>
    <property type="project" value="SGD"/>
</dbReference>
<dbReference type="GO" id="GO:0005886">
    <property type="term" value="C:plasma membrane"/>
    <property type="evidence" value="ECO:0000314"/>
    <property type="project" value="SGD"/>
</dbReference>
<dbReference type="GO" id="GO:0008559">
    <property type="term" value="F:ABC-type xenobiotic transporter activity"/>
    <property type="evidence" value="ECO:0000314"/>
    <property type="project" value="SGD"/>
</dbReference>
<dbReference type="GO" id="GO:0005524">
    <property type="term" value="F:ATP binding"/>
    <property type="evidence" value="ECO:0007669"/>
    <property type="project" value="UniProtKB-KW"/>
</dbReference>
<dbReference type="GO" id="GO:0016887">
    <property type="term" value="F:ATP hydrolysis activity"/>
    <property type="evidence" value="ECO:0007669"/>
    <property type="project" value="InterPro"/>
</dbReference>
<dbReference type="GO" id="GO:0042802">
    <property type="term" value="F:identical protein binding"/>
    <property type="evidence" value="ECO:0000353"/>
    <property type="project" value="IntAct"/>
</dbReference>
<dbReference type="GO" id="GO:0030003">
    <property type="term" value="P:intracellular monoatomic cation homeostasis"/>
    <property type="evidence" value="ECO:0000315"/>
    <property type="project" value="SGD"/>
</dbReference>
<dbReference type="GO" id="GO:0046677">
    <property type="term" value="P:response to antibiotic"/>
    <property type="evidence" value="ECO:0007669"/>
    <property type="project" value="UniProtKB-KW"/>
</dbReference>
<dbReference type="GO" id="GO:0046898">
    <property type="term" value="P:response to cycloheximide"/>
    <property type="evidence" value="ECO:0007669"/>
    <property type="project" value="UniProtKB-KW"/>
</dbReference>
<dbReference type="GO" id="GO:0009410">
    <property type="term" value="P:response to xenobiotic stimulus"/>
    <property type="evidence" value="ECO:0000315"/>
    <property type="project" value="SGD"/>
</dbReference>
<dbReference type="GO" id="GO:1990961">
    <property type="term" value="P:xenobiotic detoxification by transmembrane export across the plasma membrane"/>
    <property type="evidence" value="ECO:0000315"/>
    <property type="project" value="SGD"/>
</dbReference>
<dbReference type="CDD" id="cd03233">
    <property type="entry name" value="ABCG_PDR_domain1"/>
    <property type="match status" value="1"/>
</dbReference>
<dbReference type="CDD" id="cd03232">
    <property type="entry name" value="ABCG_PDR_domain2"/>
    <property type="match status" value="1"/>
</dbReference>
<dbReference type="FunFam" id="3.40.50.300:FF:000054">
    <property type="entry name" value="ABC multidrug transporter atrF"/>
    <property type="match status" value="1"/>
</dbReference>
<dbReference type="FunFam" id="3.40.50.300:FF:001262">
    <property type="entry name" value="ABC transporter CDR4"/>
    <property type="match status" value="1"/>
</dbReference>
<dbReference type="Gene3D" id="3.40.50.300">
    <property type="entry name" value="P-loop containing nucleotide triphosphate hydrolases"/>
    <property type="match status" value="2"/>
</dbReference>
<dbReference type="InterPro" id="IPR003593">
    <property type="entry name" value="AAA+_ATPase"/>
</dbReference>
<dbReference type="InterPro" id="IPR013525">
    <property type="entry name" value="ABC2_TM"/>
</dbReference>
<dbReference type="InterPro" id="IPR029481">
    <property type="entry name" value="ABC_trans_N"/>
</dbReference>
<dbReference type="InterPro" id="IPR003439">
    <property type="entry name" value="ABC_transporter-like_ATP-bd"/>
</dbReference>
<dbReference type="InterPro" id="IPR017871">
    <property type="entry name" value="ABC_transporter-like_CS"/>
</dbReference>
<dbReference type="InterPro" id="IPR034001">
    <property type="entry name" value="ABCG_PDR_1"/>
</dbReference>
<dbReference type="InterPro" id="IPR034003">
    <property type="entry name" value="ABCG_PDR_2"/>
</dbReference>
<dbReference type="InterPro" id="IPR005285">
    <property type="entry name" value="Drug-R_PDR/CDR"/>
</dbReference>
<dbReference type="InterPro" id="IPR027417">
    <property type="entry name" value="P-loop_NTPase"/>
</dbReference>
<dbReference type="InterPro" id="IPR010929">
    <property type="entry name" value="PDR_CDR_ABC"/>
</dbReference>
<dbReference type="NCBIfam" id="TIGR00956">
    <property type="entry name" value="3a01205"/>
    <property type="match status" value="1"/>
</dbReference>
<dbReference type="PANTHER" id="PTHR19241">
    <property type="entry name" value="ATP-BINDING CASSETTE TRANSPORTER"/>
    <property type="match status" value="1"/>
</dbReference>
<dbReference type="Pfam" id="PF01061">
    <property type="entry name" value="ABC2_membrane"/>
    <property type="match status" value="2"/>
</dbReference>
<dbReference type="Pfam" id="PF00005">
    <property type="entry name" value="ABC_tran"/>
    <property type="match status" value="2"/>
</dbReference>
<dbReference type="Pfam" id="PF14510">
    <property type="entry name" value="ABC_trans_N"/>
    <property type="match status" value="1"/>
</dbReference>
<dbReference type="Pfam" id="PF06422">
    <property type="entry name" value="PDR_CDR"/>
    <property type="match status" value="1"/>
</dbReference>
<dbReference type="SMART" id="SM00382">
    <property type="entry name" value="AAA"/>
    <property type="match status" value="2"/>
</dbReference>
<dbReference type="SUPFAM" id="SSF52540">
    <property type="entry name" value="P-loop containing nucleoside triphosphate hydrolases"/>
    <property type="match status" value="2"/>
</dbReference>
<dbReference type="PROSITE" id="PS00211">
    <property type="entry name" value="ABC_TRANSPORTER_1"/>
    <property type="match status" value="1"/>
</dbReference>
<dbReference type="PROSITE" id="PS50893">
    <property type="entry name" value="ABC_TRANSPORTER_2"/>
    <property type="match status" value="2"/>
</dbReference>
<evidence type="ECO:0000255" key="1"/>
<evidence type="ECO:0000255" key="2">
    <source>
        <dbReference type="PROSITE-ProRule" id="PRU00434"/>
    </source>
</evidence>
<evidence type="ECO:0000256" key="3">
    <source>
        <dbReference type="SAM" id="MobiDB-lite"/>
    </source>
</evidence>
<evidence type="ECO:0000269" key="4">
    <source>
    </source>
</evidence>
<evidence type="ECO:0000269" key="5">
    <source>
    </source>
</evidence>
<evidence type="ECO:0000269" key="6">
    <source>
    </source>
</evidence>
<evidence type="ECO:0000269" key="7">
    <source>
    </source>
</evidence>
<evidence type="ECO:0000269" key="8">
    <source>
    </source>
</evidence>
<evidence type="ECO:0000269" key="9">
    <source>
    </source>
</evidence>
<evidence type="ECO:0000269" key="10">
    <source>
    </source>
</evidence>
<evidence type="ECO:0000269" key="11">
    <source>
    </source>
</evidence>
<evidence type="ECO:0000269" key="12">
    <source>
    </source>
</evidence>
<evidence type="ECO:0000269" key="13">
    <source>
    </source>
</evidence>
<evidence type="ECO:0000269" key="14">
    <source>
    </source>
</evidence>
<evidence type="ECO:0000269" key="15">
    <source>
    </source>
</evidence>
<evidence type="ECO:0000269" key="16">
    <source>
    </source>
</evidence>
<evidence type="ECO:0000269" key="17">
    <source>
    </source>
</evidence>
<evidence type="ECO:0000269" key="18">
    <source>
    </source>
</evidence>
<evidence type="ECO:0000269" key="19">
    <source>
    </source>
</evidence>
<evidence type="ECO:0000269" key="20">
    <source>
    </source>
</evidence>
<evidence type="ECO:0000269" key="21">
    <source>
    </source>
</evidence>
<evidence type="ECO:0000269" key="22">
    <source>
    </source>
</evidence>
<evidence type="ECO:0000269" key="23">
    <source>
    </source>
</evidence>
<evidence type="ECO:0000269" key="24">
    <source>
    </source>
</evidence>
<evidence type="ECO:0000269" key="25">
    <source>
    </source>
</evidence>
<evidence type="ECO:0000269" key="26">
    <source>
    </source>
</evidence>
<evidence type="ECO:0000269" key="27">
    <source>
    </source>
</evidence>
<evidence type="ECO:0000269" key="28">
    <source>
    </source>
</evidence>
<evidence type="ECO:0000269" key="29">
    <source>
    </source>
</evidence>
<evidence type="ECO:0000269" key="30">
    <source>
    </source>
</evidence>
<evidence type="ECO:0000269" key="31">
    <source>
    </source>
</evidence>
<evidence type="ECO:0000269" key="32">
    <source>
    </source>
</evidence>
<evidence type="ECO:0000269" key="33">
    <source>
    </source>
</evidence>
<evidence type="ECO:0000305" key="34"/>
<evidence type="ECO:0007744" key="35">
    <source>
    </source>
</evidence>
<evidence type="ECO:0007744" key="36">
    <source>
    </source>
</evidence>
<evidence type="ECO:0007744" key="37">
    <source>
    </source>
</evidence>
<evidence type="ECO:0007744" key="38">
    <source>
    </source>
</evidence>
<evidence type="ECO:0007829" key="39">
    <source>
        <dbReference type="PDB" id="7P03"/>
    </source>
</evidence>
<evidence type="ECO:0007829" key="40">
    <source>
        <dbReference type="PDB" id="7P04"/>
    </source>
</evidence>
<evidence type="ECO:0007829" key="41">
    <source>
        <dbReference type="PDB" id="7P05"/>
    </source>
</evidence>
<name>PDR5_YEAST</name>